<name>IDI2_SACI4</name>
<comment type="function">
    <text evidence="1">Involved in the biosynthesis of isoprenoids. Catalyzes the 1,3-allylic rearrangement of the homoallylic substrate isopentenyl (IPP) to its allylic isomer, dimethylallyl diphosphate (DMAPP).</text>
</comment>
<comment type="catalytic activity">
    <reaction evidence="1">
        <text>isopentenyl diphosphate = dimethylallyl diphosphate</text>
        <dbReference type="Rhea" id="RHEA:23284"/>
        <dbReference type="ChEBI" id="CHEBI:57623"/>
        <dbReference type="ChEBI" id="CHEBI:128769"/>
        <dbReference type="EC" id="5.3.3.2"/>
    </reaction>
</comment>
<comment type="cofactor">
    <cofactor evidence="1">
        <name>FMN</name>
        <dbReference type="ChEBI" id="CHEBI:58210"/>
    </cofactor>
</comment>
<comment type="cofactor">
    <cofactor evidence="1">
        <name>NADPH</name>
        <dbReference type="ChEBI" id="CHEBI:57783"/>
    </cofactor>
</comment>
<comment type="cofactor">
    <cofactor evidence="1">
        <name>Mg(2+)</name>
        <dbReference type="ChEBI" id="CHEBI:18420"/>
    </cofactor>
</comment>
<comment type="subunit">
    <text evidence="1">Homooctamer. Dimer of tetramers.</text>
</comment>
<comment type="subcellular location">
    <subcellularLocation>
        <location evidence="1">Cytoplasm</location>
    </subcellularLocation>
</comment>
<comment type="similarity">
    <text evidence="1">Belongs to the IPP isomerase type 2 family.</text>
</comment>
<gene>
    <name evidence="1" type="primary">fni</name>
    <name type="ordered locus">M1425_2057</name>
</gene>
<proteinExistence type="inferred from homology"/>
<feature type="chain" id="PRO_1000205356" description="Isopentenyl-diphosphate delta-isomerase">
    <location>
        <begin position="1"/>
        <end position="368"/>
    </location>
</feature>
<feature type="binding site" evidence="1">
    <location>
        <begin position="7"/>
        <end position="8"/>
    </location>
    <ligand>
        <name>substrate</name>
    </ligand>
</feature>
<feature type="binding site" evidence="1">
    <location>
        <position position="65"/>
    </location>
    <ligand>
        <name>FMN</name>
        <dbReference type="ChEBI" id="CHEBI:58210"/>
    </ligand>
</feature>
<feature type="binding site" evidence="1">
    <location>
        <begin position="66"/>
        <end position="68"/>
    </location>
    <ligand>
        <name>FMN</name>
        <dbReference type="ChEBI" id="CHEBI:58210"/>
    </ligand>
</feature>
<feature type="binding site" evidence="1">
    <location>
        <begin position="96"/>
        <end position="98"/>
    </location>
    <ligand>
        <name>substrate</name>
    </ligand>
</feature>
<feature type="binding site" evidence="1">
    <location>
        <position position="96"/>
    </location>
    <ligand>
        <name>FMN</name>
        <dbReference type="ChEBI" id="CHEBI:58210"/>
    </ligand>
</feature>
<feature type="binding site" evidence="1">
    <location>
        <position position="125"/>
    </location>
    <ligand>
        <name>FMN</name>
        <dbReference type="ChEBI" id="CHEBI:58210"/>
    </ligand>
</feature>
<feature type="binding site" evidence="1">
    <location>
        <position position="160"/>
    </location>
    <ligand>
        <name>substrate</name>
    </ligand>
</feature>
<feature type="binding site" evidence="1">
    <location>
        <position position="161"/>
    </location>
    <ligand>
        <name>Mg(2+)</name>
        <dbReference type="ChEBI" id="CHEBI:18420"/>
    </ligand>
</feature>
<feature type="binding site" evidence="1">
    <location>
        <position position="193"/>
    </location>
    <ligand>
        <name>FMN</name>
        <dbReference type="ChEBI" id="CHEBI:58210"/>
    </ligand>
</feature>
<feature type="binding site" evidence="1">
    <location>
        <position position="218"/>
    </location>
    <ligand>
        <name>FMN</name>
        <dbReference type="ChEBI" id="CHEBI:58210"/>
    </ligand>
</feature>
<feature type="binding site" evidence="1">
    <location>
        <position position="223"/>
    </location>
    <ligand>
        <name>FMN</name>
        <dbReference type="ChEBI" id="CHEBI:58210"/>
    </ligand>
</feature>
<feature type="binding site" evidence="1">
    <location>
        <begin position="275"/>
        <end position="277"/>
    </location>
    <ligand>
        <name>FMN</name>
        <dbReference type="ChEBI" id="CHEBI:58210"/>
    </ligand>
</feature>
<feature type="binding site" evidence="1">
    <location>
        <begin position="296"/>
        <end position="297"/>
    </location>
    <ligand>
        <name>FMN</name>
        <dbReference type="ChEBI" id="CHEBI:58210"/>
    </ligand>
</feature>
<protein>
    <recommendedName>
        <fullName evidence="1">Isopentenyl-diphosphate delta-isomerase</fullName>
        <shortName evidence="1">IPP isomerase</shortName>
        <ecNumber evidence="1">5.3.3.2</ecNumber>
    </recommendedName>
    <alternativeName>
        <fullName evidence="1">Isopentenyl diphosphate:dimethylallyl diphosphate isomerase</fullName>
    </alternativeName>
    <alternativeName>
        <fullName evidence="1">Isopentenyl pyrophosphate isomerase</fullName>
    </alternativeName>
    <alternativeName>
        <fullName evidence="1">Type 2 isopentenyl diphosphate isomerase</fullName>
        <shortName evidence="1">IDI-2</shortName>
    </alternativeName>
</protein>
<keyword id="KW-0963">Cytoplasm</keyword>
<keyword id="KW-0285">Flavoprotein</keyword>
<keyword id="KW-0288">FMN</keyword>
<keyword id="KW-0413">Isomerase</keyword>
<keyword id="KW-0414">Isoprene biosynthesis</keyword>
<keyword id="KW-0460">Magnesium</keyword>
<keyword id="KW-0479">Metal-binding</keyword>
<keyword id="KW-0521">NADP</keyword>
<accession>C3MZ14</accession>
<evidence type="ECO:0000255" key="1">
    <source>
        <dbReference type="HAMAP-Rule" id="MF_00354"/>
    </source>
</evidence>
<sequence length="368" mass="40444">MPDIVNRKVEHVEIAAFENVDGLSSSTFLNDVILVHQGFPGISFSEINTKTKFFRKEISVPIMVTGMTGGRNELGRINKIIAEVTEKFGIPMGVGSQRVAIEKAEARESFAIVRKVAPTIPIIANLGMPQLVKGYGLKEFQDAIQMIEADAIAVHLNPAQEVFQPEGEPEYQIYALEKLRDISKELSVPIIVKESGNGISMETAKLLYSYGIKNFDTSGQGGTNWIAIEMIRDIRRGNWKAESAKNFLDWGVPTAASIMEVRYSVPDSFLVGSGGIRSGLDAAKAIALGADIAGMALPVLKSAIEGKESLEQFFRKIIFELKAAMMLTGSKDVNALKKTSIVILGKLKEWAEYRGINLSTYDKVRKRE</sequence>
<dbReference type="EC" id="5.3.3.2" evidence="1"/>
<dbReference type="EMBL" id="CP001400">
    <property type="protein sequence ID" value="ACP38798.1"/>
    <property type="molecule type" value="Genomic_DNA"/>
</dbReference>
<dbReference type="RefSeq" id="WP_012712024.1">
    <property type="nucleotide sequence ID" value="NC_012588.1"/>
</dbReference>
<dbReference type="SMR" id="C3MZ14"/>
<dbReference type="GeneID" id="84062367"/>
<dbReference type="KEGG" id="sia:M1425_2057"/>
<dbReference type="HOGENOM" id="CLU_065515_1_0_2"/>
<dbReference type="Proteomes" id="UP000001350">
    <property type="component" value="Chromosome"/>
</dbReference>
<dbReference type="GO" id="GO:0005737">
    <property type="term" value="C:cytoplasm"/>
    <property type="evidence" value="ECO:0007669"/>
    <property type="project" value="UniProtKB-SubCell"/>
</dbReference>
<dbReference type="GO" id="GO:0010181">
    <property type="term" value="F:FMN binding"/>
    <property type="evidence" value="ECO:0007669"/>
    <property type="project" value="UniProtKB-UniRule"/>
</dbReference>
<dbReference type="GO" id="GO:0004452">
    <property type="term" value="F:isopentenyl-diphosphate delta-isomerase activity"/>
    <property type="evidence" value="ECO:0007669"/>
    <property type="project" value="UniProtKB-UniRule"/>
</dbReference>
<dbReference type="GO" id="GO:0000287">
    <property type="term" value="F:magnesium ion binding"/>
    <property type="evidence" value="ECO:0007669"/>
    <property type="project" value="UniProtKB-UniRule"/>
</dbReference>
<dbReference type="GO" id="GO:0070402">
    <property type="term" value="F:NADPH binding"/>
    <property type="evidence" value="ECO:0007669"/>
    <property type="project" value="UniProtKB-UniRule"/>
</dbReference>
<dbReference type="GO" id="GO:0016491">
    <property type="term" value="F:oxidoreductase activity"/>
    <property type="evidence" value="ECO:0007669"/>
    <property type="project" value="InterPro"/>
</dbReference>
<dbReference type="GO" id="GO:0008299">
    <property type="term" value="P:isoprenoid biosynthetic process"/>
    <property type="evidence" value="ECO:0007669"/>
    <property type="project" value="UniProtKB-UniRule"/>
</dbReference>
<dbReference type="CDD" id="cd02811">
    <property type="entry name" value="IDI-2_FMN"/>
    <property type="match status" value="1"/>
</dbReference>
<dbReference type="FunFam" id="3.20.20.70:FF:000258">
    <property type="entry name" value="Isopentenyl-diphosphate delta-isomerase"/>
    <property type="match status" value="1"/>
</dbReference>
<dbReference type="Gene3D" id="3.20.20.70">
    <property type="entry name" value="Aldolase class I"/>
    <property type="match status" value="1"/>
</dbReference>
<dbReference type="HAMAP" id="MF_00354">
    <property type="entry name" value="Idi_2"/>
    <property type="match status" value="1"/>
</dbReference>
<dbReference type="InterPro" id="IPR013785">
    <property type="entry name" value="Aldolase_TIM"/>
</dbReference>
<dbReference type="InterPro" id="IPR000262">
    <property type="entry name" value="FMN-dep_DH"/>
</dbReference>
<dbReference type="InterPro" id="IPR011179">
    <property type="entry name" value="IPdP_isomerase"/>
</dbReference>
<dbReference type="NCBIfam" id="TIGR02151">
    <property type="entry name" value="IPP_isom_2"/>
    <property type="match status" value="1"/>
</dbReference>
<dbReference type="PANTHER" id="PTHR43665">
    <property type="entry name" value="ISOPENTENYL-DIPHOSPHATE DELTA-ISOMERASE"/>
    <property type="match status" value="1"/>
</dbReference>
<dbReference type="PANTHER" id="PTHR43665:SF1">
    <property type="entry name" value="ISOPENTENYL-DIPHOSPHATE DELTA-ISOMERASE"/>
    <property type="match status" value="1"/>
</dbReference>
<dbReference type="Pfam" id="PF01070">
    <property type="entry name" value="FMN_dh"/>
    <property type="match status" value="1"/>
</dbReference>
<dbReference type="PIRSF" id="PIRSF003314">
    <property type="entry name" value="IPP_isomerase"/>
    <property type="match status" value="1"/>
</dbReference>
<dbReference type="SMART" id="SM01240">
    <property type="entry name" value="IMPDH"/>
    <property type="match status" value="1"/>
</dbReference>
<dbReference type="SUPFAM" id="SSF51395">
    <property type="entry name" value="FMN-linked oxidoreductases"/>
    <property type="match status" value="1"/>
</dbReference>
<reference key="1">
    <citation type="journal article" date="2009" name="Proc. Natl. Acad. Sci. U.S.A.">
        <title>Biogeography of the Sulfolobus islandicus pan-genome.</title>
        <authorList>
            <person name="Reno M.L."/>
            <person name="Held N.L."/>
            <person name="Fields C.J."/>
            <person name="Burke P.V."/>
            <person name="Whitaker R.J."/>
        </authorList>
    </citation>
    <scope>NUCLEOTIDE SEQUENCE [LARGE SCALE GENOMIC DNA]</scope>
    <source>
        <strain>M.14.25 / Kamchatka #1</strain>
    </source>
</reference>
<organism>
    <name type="scientific">Saccharolobus islandicus (strain M.14.25 / Kamchatka #1)</name>
    <name type="common">Sulfolobus islandicus</name>
    <dbReference type="NCBI Taxonomy" id="427317"/>
    <lineage>
        <taxon>Archaea</taxon>
        <taxon>Thermoproteota</taxon>
        <taxon>Thermoprotei</taxon>
        <taxon>Sulfolobales</taxon>
        <taxon>Sulfolobaceae</taxon>
        <taxon>Saccharolobus</taxon>
    </lineage>
</organism>